<feature type="chain" id="PRO_0000209737" description="Phosphatidylinositol-3-phosphatase SAC1">
    <location>
        <begin position="1"/>
        <end position="623"/>
    </location>
</feature>
<feature type="topological domain" description="Cytoplasmic" evidence="12">
    <location>
        <begin position="1"/>
        <end position="523"/>
    </location>
</feature>
<feature type="transmembrane region" description="Helical" evidence="1">
    <location>
        <begin position="524"/>
        <end position="544"/>
    </location>
</feature>
<feature type="topological domain" description="Lumenal" evidence="12">
    <location>
        <begin position="545"/>
        <end position="552"/>
    </location>
</feature>
<feature type="transmembrane region" description="Helical" evidence="1">
    <location>
        <begin position="553"/>
        <end position="573"/>
    </location>
</feature>
<feature type="topological domain" description="Cytoplasmic" evidence="12">
    <location>
        <begin position="574"/>
        <end position="623"/>
    </location>
</feature>
<feature type="domain" description="SAC" evidence="2">
    <location>
        <begin position="115"/>
        <end position="454"/>
    </location>
</feature>
<feature type="cross-link" description="Glycyl lysine isopeptide (Lys-Gly) (interchain with G-Cter in ubiquitin)" evidence="13">
    <location>
        <position position="246"/>
    </location>
</feature>
<feature type="cross-link" description="Glycyl lysine isopeptide (Lys-Gly) (interchain with G-Cter in ubiquitin)" evidence="13">
    <location>
        <position position="358"/>
    </location>
</feature>
<feature type="strand" evidence="14">
    <location>
        <begin position="5"/>
        <end position="10"/>
    </location>
</feature>
<feature type="strand" evidence="14">
    <location>
        <begin position="13"/>
        <end position="20"/>
    </location>
</feature>
<feature type="strand" evidence="14">
    <location>
        <begin position="28"/>
        <end position="32"/>
    </location>
</feature>
<feature type="turn" evidence="14">
    <location>
        <begin position="33"/>
        <end position="35"/>
    </location>
</feature>
<feature type="strand" evidence="14">
    <location>
        <begin position="38"/>
        <end position="41"/>
    </location>
</feature>
<feature type="helix" evidence="14">
    <location>
        <begin position="43"/>
        <end position="45"/>
    </location>
</feature>
<feature type="strand" evidence="14">
    <location>
        <begin position="48"/>
        <end position="50"/>
    </location>
</feature>
<feature type="strand" evidence="14">
    <location>
        <begin position="53"/>
        <end position="64"/>
    </location>
</feature>
<feature type="strand" evidence="14">
    <location>
        <begin position="67"/>
        <end position="82"/>
    </location>
</feature>
<feature type="strand" evidence="14">
    <location>
        <begin position="85"/>
        <end position="98"/>
    </location>
</feature>
<feature type="turn" evidence="15">
    <location>
        <begin position="101"/>
        <end position="103"/>
    </location>
</feature>
<feature type="helix" evidence="14">
    <location>
        <begin position="106"/>
        <end position="121"/>
    </location>
</feature>
<feature type="strand" evidence="15">
    <location>
        <begin position="124"/>
        <end position="126"/>
    </location>
</feature>
<feature type="strand" evidence="14">
    <location>
        <begin position="128"/>
        <end position="130"/>
    </location>
</feature>
<feature type="helix" evidence="14">
    <location>
        <begin position="136"/>
        <end position="142"/>
    </location>
</feature>
<feature type="helix" evidence="14">
    <location>
        <begin position="148"/>
        <end position="150"/>
    </location>
</feature>
<feature type="turn" evidence="14">
    <location>
        <begin position="153"/>
        <end position="155"/>
    </location>
</feature>
<feature type="turn" evidence="14">
    <location>
        <begin position="157"/>
        <end position="159"/>
    </location>
</feature>
<feature type="helix" evidence="14">
    <location>
        <begin position="160"/>
        <end position="162"/>
    </location>
</feature>
<feature type="helix" evidence="14">
    <location>
        <begin position="163"/>
        <end position="169"/>
    </location>
</feature>
<feature type="helix" evidence="14">
    <location>
        <begin position="173"/>
        <end position="178"/>
    </location>
</feature>
<feature type="strand" evidence="14">
    <location>
        <begin position="183"/>
        <end position="194"/>
    </location>
</feature>
<feature type="strand" evidence="14">
    <location>
        <begin position="197"/>
        <end position="207"/>
    </location>
</feature>
<feature type="strand" evidence="14">
    <location>
        <begin position="213"/>
        <end position="215"/>
    </location>
</feature>
<feature type="strand" evidence="14">
    <location>
        <begin position="218"/>
        <end position="221"/>
    </location>
</feature>
<feature type="strand" evidence="14">
    <location>
        <begin position="230"/>
        <end position="240"/>
    </location>
</feature>
<feature type="turn" evidence="14">
    <location>
        <begin position="242"/>
        <end position="244"/>
    </location>
</feature>
<feature type="strand" evidence="14">
    <location>
        <begin position="247"/>
        <end position="257"/>
    </location>
</feature>
<feature type="strand" evidence="14">
    <location>
        <begin position="261"/>
        <end position="263"/>
    </location>
</feature>
<feature type="strand" evidence="14">
    <location>
        <begin position="269"/>
        <end position="271"/>
    </location>
</feature>
<feature type="helix" evidence="14">
    <location>
        <begin position="279"/>
        <end position="296"/>
    </location>
</feature>
<feature type="strand" evidence="14">
    <location>
        <begin position="297"/>
        <end position="304"/>
    </location>
</feature>
<feature type="helix" evidence="14">
    <location>
        <begin position="313"/>
        <end position="325"/>
    </location>
</feature>
<feature type="strand" evidence="14">
    <location>
        <begin position="330"/>
        <end position="335"/>
    </location>
</feature>
<feature type="turn" evidence="14">
    <location>
        <begin position="341"/>
        <end position="343"/>
    </location>
</feature>
<feature type="helix" evidence="14">
    <location>
        <begin position="344"/>
        <end position="359"/>
    </location>
</feature>
<feature type="strand" evidence="14">
    <location>
        <begin position="366"/>
        <end position="371"/>
    </location>
</feature>
<feature type="strand" evidence="14">
    <location>
        <begin position="377"/>
        <end position="382"/>
    </location>
</feature>
<feature type="strand" evidence="14">
    <location>
        <begin position="386"/>
        <end position="391"/>
    </location>
</feature>
<feature type="helix" evidence="14">
    <location>
        <begin position="396"/>
        <end position="417"/>
    </location>
</feature>
<feature type="helix" evidence="14">
    <location>
        <begin position="427"/>
        <end position="429"/>
    </location>
</feature>
<feature type="helix" evidence="14">
    <location>
        <begin position="431"/>
        <end position="448"/>
    </location>
</feature>
<feature type="turn" evidence="14">
    <location>
        <begin position="449"/>
        <end position="451"/>
    </location>
</feature>
<keyword id="KW-0002">3D-structure</keyword>
<keyword id="KW-0256">Endoplasmic reticulum</keyword>
<keyword id="KW-0333">Golgi apparatus</keyword>
<keyword id="KW-0378">Hydrolase</keyword>
<keyword id="KW-1017">Isopeptide bond</keyword>
<keyword id="KW-0472">Membrane</keyword>
<keyword id="KW-1185">Reference proteome</keyword>
<keyword id="KW-0812">Transmembrane</keyword>
<keyword id="KW-1133">Transmembrane helix</keyword>
<keyword id="KW-0832">Ubl conjugation</keyword>
<protein>
    <recommendedName>
        <fullName>Phosphatidylinositol-3-phosphatase SAC1</fullName>
        <ecNumber evidence="3">3.1.3.64</ecNumber>
    </recommendedName>
    <alternativeName>
        <fullName evidence="9">Phosphatidylinositol-4-phosphate phosphatase</fullName>
    </alternativeName>
    <alternativeName>
        <fullName>Recessive suppressor of secretory defect</fullName>
    </alternativeName>
</protein>
<organism>
    <name type="scientific">Saccharomyces cerevisiae (strain ATCC 204508 / S288c)</name>
    <name type="common">Baker's yeast</name>
    <dbReference type="NCBI Taxonomy" id="559292"/>
    <lineage>
        <taxon>Eukaryota</taxon>
        <taxon>Fungi</taxon>
        <taxon>Dikarya</taxon>
        <taxon>Ascomycota</taxon>
        <taxon>Saccharomycotina</taxon>
        <taxon>Saccharomycetes</taxon>
        <taxon>Saccharomycetales</taxon>
        <taxon>Saccharomycetaceae</taxon>
        <taxon>Saccharomyces</taxon>
    </lineage>
</organism>
<sequence length="623" mass="71125">MTGPIVYVQNADGIFFKLAEGKGTNDAVIHLANQDQGVRVLGAEEFPVQGEVVKIASLMGFIKLKLNRYAIIANTVEETGRFNGHVFYRVLQHSIVSTKFNSRIDSEEAEYIKLLELHLKNSTFYFSYTYDLTNSLQRNEKVGPAASWKTADERFFWNHYLTEDLRNFAHQDPRIDSFIQPVIYGYAKTVDAVLNATPIVLGLITRRSIFRAGTRYFRRGVDKDGNVGNFNETEQILLAENPESEKIHVFSFLQTRGSVPIYWAEINNLKYKPNLVLGENSLDATKKHFDQQKELYGDNYLVNLVNQKGHELPVKEGYESVVHALNDPKIHYVYFDFHHECRKMQWHRVKLLIDHLEKLGLSNEDFFHKVIDSNGNTVEIVNEQHSVVRTNCMDCLDRTNVVQSVLAQWVLQKEFESADVVATGSTWEDNAPLLTSYQNLWADNADAVSVAYSGTGALKTDFTRTGKRTRLGAFNDFLNSASRYYQNNWTDGPRQDSYDLFLGGFRPHTASIKSPFPDRRPVYIQLIPMIICAALTVLGATIFFPKDRFTSSKNLLYFAGASIVLALSTKFMFKNGIQFVNWPKLVDVGFLVVHQTHDKEQQFKGLKYAQSPKFSKPDPLKRD</sequence>
<proteinExistence type="evidence at protein level"/>
<gene>
    <name type="primary">SAC1</name>
    <name type="synonym">RSD1</name>
    <name type="ordered locus">YKL212W</name>
</gene>
<name>SAC1_YEAST</name>
<accession>P32368</accession>
<accession>D6VWZ1</accession>
<dbReference type="EC" id="3.1.3.64" evidence="3"/>
<dbReference type="EMBL" id="X51672">
    <property type="protein sequence ID" value="CAA35979.1"/>
    <property type="molecule type" value="Genomic_DNA"/>
</dbReference>
<dbReference type="EMBL" id="X75951">
    <property type="protein sequence ID" value="CAA53561.1"/>
    <property type="molecule type" value="Genomic_DNA"/>
</dbReference>
<dbReference type="EMBL" id="Z28212">
    <property type="protein sequence ID" value="CAA82057.1"/>
    <property type="molecule type" value="Genomic_DNA"/>
</dbReference>
<dbReference type="EMBL" id="U39947">
    <property type="protein sequence ID" value="AAA82257.1"/>
    <property type="molecule type" value="Genomic_DNA"/>
</dbReference>
<dbReference type="EMBL" id="BK006944">
    <property type="protein sequence ID" value="DAA08957.1"/>
    <property type="molecule type" value="Genomic_DNA"/>
</dbReference>
<dbReference type="PIR" id="A33622">
    <property type="entry name" value="A33622"/>
</dbReference>
<dbReference type="RefSeq" id="NP_012710.1">
    <property type="nucleotide sequence ID" value="NM_001179777.1"/>
</dbReference>
<dbReference type="PDB" id="3LWT">
    <property type="method" value="X-ray"/>
    <property type="resolution" value="1.96 A"/>
    <property type="chains" value="X=1-504"/>
</dbReference>
<dbReference type="PDB" id="4TU3">
    <property type="method" value="X-ray"/>
    <property type="resolution" value="3.19 A"/>
    <property type="chains" value="X=1-623"/>
</dbReference>
<dbReference type="PDB" id="8C81">
    <property type="method" value="EM"/>
    <property type="resolution" value="3.30 A"/>
    <property type="chains" value="E=1-623"/>
</dbReference>
<dbReference type="PDBsum" id="3LWT"/>
<dbReference type="PDBsum" id="4TU3"/>
<dbReference type="PDBsum" id="8C81"/>
<dbReference type="EMDB" id="EMD-16468"/>
<dbReference type="SMR" id="P32368"/>
<dbReference type="BioGRID" id="33953">
    <property type="interactions" value="1097"/>
</dbReference>
<dbReference type="ComplexPortal" id="CPX-3158">
    <property type="entry name" value="SPOTS complex"/>
</dbReference>
<dbReference type="DIP" id="DIP-6610N"/>
<dbReference type="FunCoup" id="P32368">
    <property type="interactions" value="1604"/>
</dbReference>
<dbReference type="IntAct" id="P32368">
    <property type="interactions" value="26"/>
</dbReference>
<dbReference type="MINT" id="P32368"/>
<dbReference type="STRING" id="4932.YKL212W"/>
<dbReference type="SwissLipids" id="SLP:000001848"/>
<dbReference type="iPTMnet" id="P32368"/>
<dbReference type="PaxDb" id="4932-YKL212W"/>
<dbReference type="PeptideAtlas" id="P32368"/>
<dbReference type="EnsemblFungi" id="YKL212W_mRNA">
    <property type="protein sequence ID" value="YKL212W"/>
    <property type="gene ID" value="YKL212W"/>
</dbReference>
<dbReference type="GeneID" id="853668"/>
<dbReference type="KEGG" id="sce:YKL212W"/>
<dbReference type="AGR" id="SGD:S000001695"/>
<dbReference type="SGD" id="S000001695">
    <property type="gene designation" value="SAC1"/>
</dbReference>
<dbReference type="VEuPathDB" id="FungiDB:YKL212W"/>
<dbReference type="eggNOG" id="KOG1889">
    <property type="taxonomic scope" value="Eukaryota"/>
</dbReference>
<dbReference type="GeneTree" id="ENSGT00940000155579"/>
<dbReference type="HOGENOM" id="CLU_003016_7_4_1"/>
<dbReference type="InParanoid" id="P32368"/>
<dbReference type="OMA" id="ITKAQPV"/>
<dbReference type="OrthoDB" id="405996at2759"/>
<dbReference type="BioCyc" id="MetaCyc:G3O-31970-MONOMER"/>
<dbReference type="BioCyc" id="YEAST:G3O-31970-MONOMER"/>
<dbReference type="Reactome" id="R-SCE-1483248">
    <property type="pathway name" value="Synthesis of PIPs at the ER membrane"/>
</dbReference>
<dbReference type="Reactome" id="R-SCE-1660514">
    <property type="pathway name" value="Synthesis of PIPs at the Golgi membrane"/>
</dbReference>
<dbReference type="BioGRID-ORCS" id="853668">
    <property type="hits" value="0 hits in 10 CRISPR screens"/>
</dbReference>
<dbReference type="EvolutionaryTrace" id="P32368"/>
<dbReference type="PRO" id="PR:P32368"/>
<dbReference type="Proteomes" id="UP000002311">
    <property type="component" value="Chromosome XI"/>
</dbReference>
<dbReference type="RNAct" id="P32368">
    <property type="molecule type" value="protein"/>
</dbReference>
<dbReference type="GO" id="GO:0032541">
    <property type="term" value="C:cortical endoplasmic reticulum"/>
    <property type="evidence" value="ECO:0000314"/>
    <property type="project" value="SGD"/>
</dbReference>
<dbReference type="GO" id="GO:0005783">
    <property type="term" value="C:endoplasmic reticulum"/>
    <property type="evidence" value="ECO:0007005"/>
    <property type="project" value="SGD"/>
</dbReference>
<dbReference type="GO" id="GO:0005789">
    <property type="term" value="C:endoplasmic reticulum membrane"/>
    <property type="evidence" value="ECO:0000314"/>
    <property type="project" value="SGD"/>
</dbReference>
<dbReference type="GO" id="GO:0005797">
    <property type="term" value="C:Golgi medial cisterna"/>
    <property type="evidence" value="ECO:0000314"/>
    <property type="project" value="SGD"/>
</dbReference>
<dbReference type="GO" id="GO:0000139">
    <property type="term" value="C:Golgi membrane"/>
    <property type="evidence" value="ECO:0000314"/>
    <property type="project" value="SGD"/>
</dbReference>
<dbReference type="GO" id="GO:0072517">
    <property type="term" value="C:host cell viral assembly compartment"/>
    <property type="evidence" value="ECO:0000315"/>
    <property type="project" value="SGD"/>
</dbReference>
<dbReference type="GO" id="GO:0005741">
    <property type="term" value="C:mitochondrial outer membrane"/>
    <property type="evidence" value="ECO:0007005"/>
    <property type="project" value="SGD"/>
</dbReference>
<dbReference type="GO" id="GO:0005739">
    <property type="term" value="C:mitochondrion"/>
    <property type="evidence" value="ECO:0007005"/>
    <property type="project" value="SGD"/>
</dbReference>
<dbReference type="GO" id="GO:0017059">
    <property type="term" value="C:serine palmitoyltransferase complex"/>
    <property type="evidence" value="ECO:0000314"/>
    <property type="project" value="UniProtKB"/>
</dbReference>
<dbReference type="GO" id="GO:0052629">
    <property type="term" value="F:phosphatidylinositol-3,5-bisphosphate 3-phosphatase activity"/>
    <property type="evidence" value="ECO:0000314"/>
    <property type="project" value="SGD"/>
</dbReference>
<dbReference type="GO" id="GO:0004438">
    <property type="term" value="F:phosphatidylinositol-3-phosphate phosphatase activity"/>
    <property type="evidence" value="ECO:0000314"/>
    <property type="project" value="SGD"/>
</dbReference>
<dbReference type="GO" id="GO:0043812">
    <property type="term" value="F:phosphatidylinositol-4-phosphate phosphatase activity"/>
    <property type="evidence" value="ECO:0000314"/>
    <property type="project" value="UniProtKB"/>
</dbReference>
<dbReference type="GO" id="GO:0061909">
    <property type="term" value="P:autophagosome-lysosome fusion"/>
    <property type="evidence" value="ECO:0000315"/>
    <property type="project" value="SGD"/>
</dbReference>
<dbReference type="GO" id="GO:0090156">
    <property type="term" value="P:intracellular sphingolipid homeostasis"/>
    <property type="evidence" value="ECO:0000303"/>
    <property type="project" value="ComplexPortal"/>
</dbReference>
<dbReference type="GO" id="GO:0046856">
    <property type="term" value="P:phosphatidylinositol dephosphorylation"/>
    <property type="evidence" value="ECO:0000314"/>
    <property type="project" value="SGD"/>
</dbReference>
<dbReference type="InterPro" id="IPR002013">
    <property type="entry name" value="SAC_dom"/>
</dbReference>
<dbReference type="PANTHER" id="PTHR45662">
    <property type="entry name" value="PHOSPHATIDYLINOSITIDE PHOSPHATASE SAC1"/>
    <property type="match status" value="1"/>
</dbReference>
<dbReference type="PANTHER" id="PTHR45662:SF2">
    <property type="entry name" value="PHOSPHATIDYLINOSITOL-3-PHOSPHATASE SAC1"/>
    <property type="match status" value="1"/>
</dbReference>
<dbReference type="Pfam" id="PF02383">
    <property type="entry name" value="Syja_N"/>
    <property type="match status" value="1"/>
</dbReference>
<dbReference type="PROSITE" id="PS50275">
    <property type="entry name" value="SAC"/>
    <property type="match status" value="1"/>
</dbReference>
<reference key="1">
    <citation type="journal article" date="1989" name="J. Cell Biol.">
        <title>Mutations in the SAC1 gene suppress defects in yeast Golgi and yeast actin function.</title>
        <authorList>
            <person name="Cleves A.E."/>
            <person name="Novick P.J."/>
            <person name="Bankaitis V.A."/>
        </authorList>
    </citation>
    <scope>NUCLEOTIDE SEQUENCE [GENOMIC DNA]</scope>
</reference>
<reference key="2">
    <citation type="journal article" date="1994" name="Yeast">
        <title>The complete sequencing of a 24.6 kb segment of yeast chromosome XI identified the known loci URA1, SAC1 and TRP3, and revealed 6 new open reading frames including homologues to the threonine dehydratases, membrane transporters, hydantoinases and the phospholipase A2-activating protein.</title>
        <authorList>
            <person name="Tzermia M."/>
            <person name="Horaitis O."/>
            <person name="Alexandraki D."/>
        </authorList>
    </citation>
    <scope>NUCLEOTIDE SEQUENCE [GENOMIC DNA]</scope>
    <source>
        <strain>ATCC 204508 / S288c</strain>
    </source>
</reference>
<reference key="3">
    <citation type="journal article" date="1994" name="Nature">
        <title>Complete DNA sequence of yeast chromosome XI.</title>
        <authorList>
            <person name="Dujon B."/>
            <person name="Alexandraki D."/>
            <person name="Andre B."/>
            <person name="Ansorge W."/>
            <person name="Baladron V."/>
            <person name="Ballesta J.P.G."/>
            <person name="Banrevi A."/>
            <person name="Bolle P.-A."/>
            <person name="Bolotin-Fukuhara M."/>
            <person name="Bossier P."/>
            <person name="Bou G."/>
            <person name="Boyer J."/>
            <person name="Buitrago M.J."/>
            <person name="Cheret G."/>
            <person name="Colleaux L."/>
            <person name="Daignan-Fornier B."/>
            <person name="del Rey F."/>
            <person name="Dion C."/>
            <person name="Domdey H."/>
            <person name="Duesterhoeft A."/>
            <person name="Duesterhus S."/>
            <person name="Entian K.-D."/>
            <person name="Erfle H."/>
            <person name="Esteban P.F."/>
            <person name="Feldmann H."/>
            <person name="Fernandes L."/>
            <person name="Fobo G.M."/>
            <person name="Fritz C."/>
            <person name="Fukuhara H."/>
            <person name="Gabel C."/>
            <person name="Gaillon L."/>
            <person name="Garcia-Cantalejo J.M."/>
            <person name="Garcia-Ramirez J.J."/>
            <person name="Gent M.E."/>
            <person name="Ghazvini M."/>
            <person name="Goffeau A."/>
            <person name="Gonzalez A."/>
            <person name="Grothues D."/>
            <person name="Guerreiro P."/>
            <person name="Hegemann J.H."/>
            <person name="Hewitt N."/>
            <person name="Hilger F."/>
            <person name="Hollenberg C.P."/>
            <person name="Horaitis O."/>
            <person name="Indge K.J."/>
            <person name="Jacquier A."/>
            <person name="James C.M."/>
            <person name="Jauniaux J.-C."/>
            <person name="Jimenez A."/>
            <person name="Keuchel H."/>
            <person name="Kirchrath L."/>
            <person name="Kleine K."/>
            <person name="Koetter P."/>
            <person name="Legrain P."/>
            <person name="Liebl S."/>
            <person name="Louis E.J."/>
            <person name="Maia e Silva A."/>
            <person name="Marck C."/>
            <person name="Monnier A.-L."/>
            <person name="Moestl D."/>
            <person name="Mueller S."/>
            <person name="Obermaier B."/>
            <person name="Oliver S.G."/>
            <person name="Pallier C."/>
            <person name="Pascolo S."/>
            <person name="Pfeiffer F."/>
            <person name="Philippsen P."/>
            <person name="Planta R.J."/>
            <person name="Pohl F.M."/>
            <person name="Pohl T.M."/>
            <person name="Poehlmann R."/>
            <person name="Portetelle D."/>
            <person name="Purnelle B."/>
            <person name="Puzos V."/>
            <person name="Ramezani Rad M."/>
            <person name="Rasmussen S.W."/>
            <person name="Remacha M.A."/>
            <person name="Revuelta J.L."/>
            <person name="Richard G.-F."/>
            <person name="Rieger M."/>
            <person name="Rodrigues-Pousada C."/>
            <person name="Rose M."/>
            <person name="Rupp T."/>
            <person name="Santos M.A."/>
            <person name="Schwager C."/>
            <person name="Sensen C."/>
            <person name="Skala J."/>
            <person name="Soares H."/>
            <person name="Sor F."/>
            <person name="Stegemann J."/>
            <person name="Tettelin H."/>
            <person name="Thierry A."/>
            <person name="Tzermia M."/>
            <person name="Urrestarazu L.A."/>
            <person name="van Dyck L."/>
            <person name="van Vliet-Reedijk J.C."/>
            <person name="Valens M."/>
            <person name="Vandenbol M."/>
            <person name="Vilela C."/>
            <person name="Vissers S."/>
            <person name="von Wettstein D."/>
            <person name="Voss H."/>
            <person name="Wiemann S."/>
            <person name="Xu G."/>
            <person name="Zimmermann J."/>
            <person name="Haasemann M."/>
            <person name="Becker I."/>
            <person name="Mewes H.-W."/>
        </authorList>
    </citation>
    <scope>NUCLEOTIDE SEQUENCE [LARGE SCALE GENOMIC DNA]</scope>
    <source>
        <strain>ATCC 204508 / S288c</strain>
    </source>
</reference>
<reference key="4">
    <citation type="journal article" date="2014" name="G3 (Bethesda)">
        <title>The reference genome sequence of Saccharomyces cerevisiae: Then and now.</title>
        <authorList>
            <person name="Engel S.R."/>
            <person name="Dietrich F.S."/>
            <person name="Fisk D.G."/>
            <person name="Binkley G."/>
            <person name="Balakrishnan R."/>
            <person name="Costanzo M.C."/>
            <person name="Dwight S.S."/>
            <person name="Hitz B.C."/>
            <person name="Karra K."/>
            <person name="Nash R.S."/>
            <person name="Weng S."/>
            <person name="Wong E.D."/>
            <person name="Lloyd P."/>
            <person name="Skrzypek M.S."/>
            <person name="Miyasato S.R."/>
            <person name="Simison M."/>
            <person name="Cherry J.M."/>
        </authorList>
    </citation>
    <scope>GENOME REANNOTATION</scope>
    <source>
        <strain>ATCC 204508 / S288c</strain>
    </source>
</reference>
<reference key="5">
    <citation type="submission" date="1995-11" db="EMBL/GenBank/DDBJ databases">
        <authorList>
            <person name="Hochstrasser M."/>
            <person name="Gang G."/>
        </authorList>
    </citation>
    <scope>NUCLEOTIDE SEQUENCE [GENOMIC DNA] OF 1-145</scope>
</reference>
<reference key="6">
    <citation type="journal article" date="1993" name="J. Cell Biol.">
        <title>SAC1p is an integral membrane protein that influences the cellular requirement for phospholipid transfer protein function and inositol in yeast.</title>
        <authorList>
            <person name="Whitters E.A."/>
            <person name="Cleves A.E."/>
            <person name="McGee T.P."/>
            <person name="Skinner H.B."/>
            <person name="Bankaitis V.A."/>
        </authorList>
    </citation>
    <scope>SUBCELLULAR LOCATION</scope>
</reference>
<reference key="7">
    <citation type="journal article" date="2000" name="J. Biol. Chem.">
        <title>SAC1 encodes a regulated lipid phosphoinositide phosphatase, defects in which can be suppressed by the homologous Inp52p and Inp53p phosphatases.</title>
        <authorList>
            <person name="Hughes W.E."/>
            <person name="Woscholski R."/>
            <person name="Cooke F.T."/>
            <person name="Patrick R.S."/>
            <person name="Dove S.K."/>
            <person name="McDonald N.Q."/>
            <person name="Parker P.J."/>
        </authorList>
    </citation>
    <scope>FUNCTION</scope>
    <scope>CATALYTIC ACTIVITY</scope>
</reference>
<reference key="8">
    <citation type="journal article" date="2001" name="Mol. Biol. Cell">
        <title>Sac1 lipid phosphatase and Stt4 phosphatidylinositol 4-kinase regulate a pool of phosphatidylinositol 4-phosphate that functions in the control of the actin cytoskeleton and vacuole morphology.</title>
        <authorList>
            <person name="Foti M."/>
            <person name="Audhya A."/>
            <person name="Emr S.D."/>
        </authorList>
    </citation>
    <scope>FUNCTION</scope>
    <scope>SUBCELLULAR LOCATION</scope>
</reference>
<reference key="9">
    <citation type="journal article" date="2002" name="J. Biol. Chem.">
        <title>Retention of the yeast Sac1p phosphatase in the endoplasmic reticulum causes distinct changes in cellular phosphoinositide levels and stimulates microsomal ATP transport.</title>
        <authorList>
            <person name="Konrad G."/>
            <person name="Schlecker T."/>
            <person name="Faulhammer F."/>
            <person name="Mayinger P."/>
        </authorList>
    </citation>
    <scope>FUNCTION</scope>
    <scope>CATALYTIC ACTIVITY</scope>
    <scope>SUBCELLULAR LOCATION</scope>
    <scope>TOPOLOGY</scope>
</reference>
<reference key="10">
    <citation type="journal article" date="2003" name="Nature">
        <title>Global analysis of protein expression in yeast.</title>
        <authorList>
            <person name="Ghaemmaghami S."/>
            <person name="Huh W.-K."/>
            <person name="Bower K."/>
            <person name="Howson R.W."/>
            <person name="Belle A."/>
            <person name="Dephoure N."/>
            <person name="O'Shea E.K."/>
            <person name="Weissman J.S."/>
        </authorList>
    </citation>
    <scope>LEVEL OF PROTEIN EXPRESSION [LARGE SCALE ANALYSIS]</scope>
</reference>
<reference key="11">
    <citation type="journal article" date="2006" name="Proc. Natl. Acad. Sci. U.S.A.">
        <title>A global topology map of the Saccharomyces cerevisiae membrane proteome.</title>
        <authorList>
            <person name="Kim H."/>
            <person name="Melen K."/>
            <person name="Oesterberg M."/>
            <person name="von Heijne G."/>
        </authorList>
    </citation>
    <scope>TOPOLOGY [LARGE SCALE ANALYSIS]</scope>
    <source>
        <strain>ATCC 208353 / W303-1A</strain>
    </source>
</reference>
<reference key="12">
    <citation type="journal article" date="2010" name="Nature">
        <title>Orm family proteins mediate sphingolipid homeostasis.</title>
        <authorList>
            <person name="Breslow D.K."/>
            <person name="Collins S.R."/>
            <person name="Bodenmiller B."/>
            <person name="Aebersold R."/>
            <person name="Simons K."/>
            <person name="Shevchenko A."/>
            <person name="Ejsing C.S."/>
            <person name="Weissman J.S."/>
        </authorList>
    </citation>
    <scope>IDENTIFICATION IN THE SPOTS COMPLEX</scope>
</reference>
<reference key="13">
    <citation type="journal article" date="2012" name="Proteomics">
        <title>Sites of ubiquitin attachment in Saccharomyces cerevisiae.</title>
        <authorList>
            <person name="Starita L.M."/>
            <person name="Lo R.S."/>
            <person name="Eng J.K."/>
            <person name="von Haller P.D."/>
            <person name="Fields S."/>
        </authorList>
    </citation>
    <scope>UBIQUITINATION [LARGE SCALE ANALYSIS] AT LYS-246 AND LYS-358</scope>
    <scope>IDENTIFICATION BY MASS SPECTROMETRY [LARGE SCALE ANALYSIS]</scope>
</reference>
<comment type="function">
    <text evidence="3 4 5">Phosphoinositide phosphatase which catalyzes the hydrolysis of phosphatidylinositol 3-phosphate (PtdIns(3)P) and phosphatidylinositol 4-phosphate (PtdIns(4)P) (PubMed:10625610, PubMed:11792713). Has low activity towards phosphatidylinositol-3,5-bisphosphate (PtdIns(3,5)P2) (PubMed:10625610). May be involved in the coordination of the activities of the secretory pathway and the actin cytoskeleton (PubMed:11514624).</text>
</comment>
<comment type="catalytic activity">
    <reaction evidence="3">
        <text>a 1,2-diacyl-sn-glycero-3-phospho-(1D-myo-inositol-3-phosphate) + H2O = a 1,2-diacyl-sn-glycero-3-phospho-(1D-myo-inositol) + phosphate</text>
        <dbReference type="Rhea" id="RHEA:12316"/>
        <dbReference type="ChEBI" id="CHEBI:15377"/>
        <dbReference type="ChEBI" id="CHEBI:43474"/>
        <dbReference type="ChEBI" id="CHEBI:57880"/>
        <dbReference type="ChEBI" id="CHEBI:58088"/>
        <dbReference type="EC" id="3.1.3.64"/>
    </reaction>
    <physiologicalReaction direction="left-to-right" evidence="11">
        <dbReference type="Rhea" id="RHEA:12317"/>
    </physiologicalReaction>
</comment>
<comment type="catalytic activity">
    <reaction evidence="3 5">
        <text>a 1,2-diacyl-sn-glycero-3-phospho-(1D-myo-inositol 4-phosphate) + H2O = a 1,2-diacyl-sn-glycero-3-phospho-(1D-myo-inositol) + phosphate</text>
        <dbReference type="Rhea" id="RHEA:55652"/>
        <dbReference type="ChEBI" id="CHEBI:15377"/>
        <dbReference type="ChEBI" id="CHEBI:43474"/>
        <dbReference type="ChEBI" id="CHEBI:57880"/>
        <dbReference type="ChEBI" id="CHEBI:58178"/>
    </reaction>
    <physiologicalReaction direction="left-to-right" evidence="11">
        <dbReference type="Rhea" id="RHEA:55653"/>
    </physiologicalReaction>
</comment>
<comment type="subunit">
    <text evidence="7">Component of the SPOTS complex, at least composed of LCB1/2 (LCB1 and/or LCB2), ORM1/2 (ORM1 and/or ORM2), SAC1 and TSC3.</text>
</comment>
<comment type="interaction">
    <interactant intactId="EBI-16210">
        <id>P32368</id>
    </interactant>
    <interactant intactId="EBI-12630">
        <id>P38713</id>
        <label>OSH3</label>
    </interactant>
    <organismsDiffer>false</organismsDiffer>
    <experiments>2</experiments>
</comment>
<comment type="subcellular location">
    <subcellularLocation>
        <location evidence="4 5 8">Endoplasmic reticulum membrane</location>
        <topology evidence="1">Multi-pass membrane protein</topology>
    </subcellularLocation>
    <subcellularLocation>
        <location evidence="8">Golgi apparatus membrane</location>
        <topology evidence="1">Multi-pass membrane protein</topology>
    </subcellularLocation>
</comment>
<comment type="miscellaneous">
    <text evidence="6">Present with 48000 molecules/cell in log phase SD medium.</text>
</comment>
<comment type="caution">
    <text evidence="10">It is uncertain whether Met-1 or Met-59 is the initiator.</text>
</comment>
<evidence type="ECO:0000255" key="1"/>
<evidence type="ECO:0000255" key="2">
    <source>
        <dbReference type="PROSITE-ProRule" id="PRU00183"/>
    </source>
</evidence>
<evidence type="ECO:0000269" key="3">
    <source>
    </source>
</evidence>
<evidence type="ECO:0000269" key="4">
    <source>
    </source>
</evidence>
<evidence type="ECO:0000269" key="5">
    <source>
    </source>
</evidence>
<evidence type="ECO:0000269" key="6">
    <source>
    </source>
</evidence>
<evidence type="ECO:0000269" key="7">
    <source>
    </source>
</evidence>
<evidence type="ECO:0000269" key="8">
    <source>
    </source>
</evidence>
<evidence type="ECO:0000303" key="9">
    <source>
    </source>
</evidence>
<evidence type="ECO:0000305" key="10"/>
<evidence type="ECO:0000305" key="11">
    <source>
    </source>
</evidence>
<evidence type="ECO:0000305" key="12">
    <source>
    </source>
</evidence>
<evidence type="ECO:0007744" key="13">
    <source>
    </source>
</evidence>
<evidence type="ECO:0007829" key="14">
    <source>
        <dbReference type="PDB" id="3LWT"/>
    </source>
</evidence>
<evidence type="ECO:0007829" key="15">
    <source>
        <dbReference type="PDB" id="4TU3"/>
    </source>
</evidence>